<keyword id="KW-0119">Carbohydrate metabolism</keyword>
<keyword id="KW-0456">Lyase</keyword>
<organism>
    <name type="scientific">Trichormus variabilis (strain ATCC 29413 / PCC 7937)</name>
    <name type="common">Anabaena variabilis</name>
    <dbReference type="NCBI Taxonomy" id="240292"/>
    <lineage>
        <taxon>Bacteria</taxon>
        <taxon>Bacillati</taxon>
        <taxon>Cyanobacteriota</taxon>
        <taxon>Cyanophyceae</taxon>
        <taxon>Nostocales</taxon>
        <taxon>Nostocaceae</taxon>
        <taxon>Trichormus</taxon>
    </lineage>
</organism>
<comment type="function">
    <text evidence="1">Specifically catalyzes the cleavage of the D-lactyl ether substituent of MurNAc 6-phosphate, producing GlcNAc 6-phosphate and D-lactate.</text>
</comment>
<comment type="catalytic activity">
    <reaction evidence="1">
        <text>N-acetyl-D-muramate 6-phosphate + H2O = N-acetyl-D-glucosamine 6-phosphate + (R)-lactate</text>
        <dbReference type="Rhea" id="RHEA:26410"/>
        <dbReference type="ChEBI" id="CHEBI:15377"/>
        <dbReference type="ChEBI" id="CHEBI:16004"/>
        <dbReference type="ChEBI" id="CHEBI:57513"/>
        <dbReference type="ChEBI" id="CHEBI:58722"/>
        <dbReference type="EC" id="4.2.1.126"/>
    </reaction>
</comment>
<comment type="pathway">
    <text evidence="1">Amino-sugar metabolism; N-acetylmuramate degradation.</text>
</comment>
<comment type="subunit">
    <text evidence="1">Homodimer.</text>
</comment>
<comment type="miscellaneous">
    <text evidence="1">A lyase-type mechanism (elimination/hydration) is suggested for the cleavage of the lactyl ether bond of MurNAc 6-phosphate, with the formation of an alpha,beta-unsaturated aldehyde intermediate with (E)-stereochemistry, followed by the syn addition of water to give product.</text>
</comment>
<comment type="similarity">
    <text evidence="1">Belongs to the GCKR-like family. MurNAc-6-P etherase subfamily.</text>
</comment>
<comment type="sequence caution" evidence="2">
    <conflict type="erroneous initiation">
        <sequence resource="EMBL-CDS" id="AAL02107"/>
    </conflict>
</comment>
<name>MURQ_TRIV2</name>
<protein>
    <recommendedName>
        <fullName evidence="1">N-acetylmuramic acid 6-phosphate etherase</fullName>
        <shortName evidence="1">MurNAc-6-P etherase</shortName>
        <ecNumber evidence="1">4.2.1.126</ecNumber>
    </recommendedName>
    <alternativeName>
        <fullName evidence="1">N-acetylmuramic acid 6-phosphate hydrolase</fullName>
    </alternativeName>
    <alternativeName>
        <fullName evidence="1">N-acetylmuramic acid 6-phosphate lyase</fullName>
    </alternativeName>
</protein>
<gene>
    <name evidence="1" type="primary">murQ</name>
    <name type="ordered locus">Ava_0242</name>
</gene>
<sequence length="307" mass="32749">MANLQERGHLLTEQVNPLSQNLDQLSSLELVELFNSEDRKTIEAVAAAKVQIATAIEQTADRLRQGGRLFYVGAGTSGRLGVLDAAECPPTFCTPPELVQGIIAGGAGALVRSSEDLEDRAEDGDAAIAQRHITQLDVVVGITAGGTTPFVQGAINSARQRGALTIFIACVPAEQVSFTADIDIRLLTGPEILAGSTRLKAGTVTKLTLNILSTGVMVKLGKVYGNRMVDVAVTNQKLRDRALRILEDLTGLSREAAGFLLERSGKWVKLALVMHWTGLDKDAGDRLLSAHQGNLREAVASYKNQGN</sequence>
<evidence type="ECO:0000255" key="1">
    <source>
        <dbReference type="HAMAP-Rule" id="MF_00068"/>
    </source>
</evidence>
<evidence type="ECO:0000305" key="2"/>
<proteinExistence type="inferred from homology"/>
<dbReference type="EC" id="4.2.1.126" evidence="1"/>
<dbReference type="EMBL" id="AF408411">
    <property type="protein sequence ID" value="AAL02107.1"/>
    <property type="status" value="ALT_INIT"/>
    <property type="molecule type" value="Genomic_DNA"/>
</dbReference>
<dbReference type="EMBL" id="CP000117">
    <property type="protein sequence ID" value="ABA19868.1"/>
    <property type="molecule type" value="Genomic_DNA"/>
</dbReference>
<dbReference type="SMR" id="Q3MGL8"/>
<dbReference type="STRING" id="240292.Ava_0242"/>
<dbReference type="KEGG" id="ava:Ava_0242"/>
<dbReference type="eggNOG" id="COG2103">
    <property type="taxonomic scope" value="Bacteria"/>
</dbReference>
<dbReference type="HOGENOM" id="CLU_049049_1_1_3"/>
<dbReference type="UniPathway" id="UPA00342"/>
<dbReference type="Proteomes" id="UP000002533">
    <property type="component" value="Chromosome"/>
</dbReference>
<dbReference type="GO" id="GO:0097367">
    <property type="term" value="F:carbohydrate derivative binding"/>
    <property type="evidence" value="ECO:0007669"/>
    <property type="project" value="InterPro"/>
</dbReference>
<dbReference type="GO" id="GO:0016835">
    <property type="term" value="F:carbon-oxygen lyase activity"/>
    <property type="evidence" value="ECO:0007669"/>
    <property type="project" value="UniProtKB-UniRule"/>
</dbReference>
<dbReference type="GO" id="GO:0016803">
    <property type="term" value="F:ether hydrolase activity"/>
    <property type="evidence" value="ECO:0007669"/>
    <property type="project" value="TreeGrafter"/>
</dbReference>
<dbReference type="GO" id="GO:0046348">
    <property type="term" value="P:amino sugar catabolic process"/>
    <property type="evidence" value="ECO:0007669"/>
    <property type="project" value="InterPro"/>
</dbReference>
<dbReference type="GO" id="GO:0097173">
    <property type="term" value="P:N-acetylmuramic acid catabolic process"/>
    <property type="evidence" value="ECO:0007669"/>
    <property type="project" value="UniProtKB-UniPathway"/>
</dbReference>
<dbReference type="GO" id="GO:0009254">
    <property type="term" value="P:peptidoglycan turnover"/>
    <property type="evidence" value="ECO:0007669"/>
    <property type="project" value="TreeGrafter"/>
</dbReference>
<dbReference type="CDD" id="cd05007">
    <property type="entry name" value="SIS_Etherase"/>
    <property type="match status" value="1"/>
</dbReference>
<dbReference type="FunFam" id="3.40.50.10490:FF:000014">
    <property type="entry name" value="N-acetylmuramic acid 6-phosphate etherase"/>
    <property type="match status" value="1"/>
</dbReference>
<dbReference type="Gene3D" id="1.10.8.1080">
    <property type="match status" value="1"/>
</dbReference>
<dbReference type="Gene3D" id="3.40.50.10490">
    <property type="entry name" value="Glucose-6-phosphate isomerase like protein, domain 1"/>
    <property type="match status" value="1"/>
</dbReference>
<dbReference type="HAMAP" id="MF_00068">
    <property type="entry name" value="MurQ"/>
    <property type="match status" value="1"/>
</dbReference>
<dbReference type="InterPro" id="IPR005488">
    <property type="entry name" value="Etherase_MurQ"/>
</dbReference>
<dbReference type="InterPro" id="IPR005486">
    <property type="entry name" value="Glucokinase_regulatory_CS"/>
</dbReference>
<dbReference type="InterPro" id="IPR040190">
    <property type="entry name" value="MURQ/GCKR"/>
</dbReference>
<dbReference type="InterPro" id="IPR001347">
    <property type="entry name" value="SIS_dom"/>
</dbReference>
<dbReference type="InterPro" id="IPR046348">
    <property type="entry name" value="SIS_dom_sf"/>
</dbReference>
<dbReference type="NCBIfam" id="TIGR00274">
    <property type="entry name" value="N-acetylmuramic acid 6-phosphate etherase"/>
    <property type="match status" value="1"/>
</dbReference>
<dbReference type="NCBIfam" id="NF003915">
    <property type="entry name" value="PRK05441.1"/>
    <property type="match status" value="1"/>
</dbReference>
<dbReference type="NCBIfam" id="NF009222">
    <property type="entry name" value="PRK12570.1"/>
    <property type="match status" value="1"/>
</dbReference>
<dbReference type="PANTHER" id="PTHR10088">
    <property type="entry name" value="GLUCOKINASE REGULATORY PROTEIN"/>
    <property type="match status" value="1"/>
</dbReference>
<dbReference type="PANTHER" id="PTHR10088:SF4">
    <property type="entry name" value="GLUCOKINASE REGULATORY PROTEIN"/>
    <property type="match status" value="1"/>
</dbReference>
<dbReference type="Pfam" id="PF20741">
    <property type="entry name" value="GKRP-like_C"/>
    <property type="match status" value="1"/>
</dbReference>
<dbReference type="Pfam" id="PF22645">
    <property type="entry name" value="GKRP_SIS_N"/>
    <property type="match status" value="1"/>
</dbReference>
<dbReference type="SUPFAM" id="SSF53697">
    <property type="entry name" value="SIS domain"/>
    <property type="match status" value="1"/>
</dbReference>
<dbReference type="PROSITE" id="PS01272">
    <property type="entry name" value="GCKR"/>
    <property type="match status" value="1"/>
</dbReference>
<dbReference type="PROSITE" id="PS51464">
    <property type="entry name" value="SIS"/>
    <property type="match status" value="1"/>
</dbReference>
<accession>Q3MGL8</accession>
<accession>Q93CJ3</accession>
<feature type="chain" id="PRO_0000249602" description="N-acetylmuramic acid 6-phosphate etherase">
    <location>
        <begin position="1"/>
        <end position="307"/>
    </location>
</feature>
<feature type="domain" description="SIS" evidence="1">
    <location>
        <begin position="59"/>
        <end position="222"/>
    </location>
</feature>
<feature type="active site" description="Proton donor" evidence="1">
    <location>
        <position position="87"/>
    </location>
</feature>
<feature type="active site" evidence="1">
    <location>
        <position position="118"/>
    </location>
</feature>
<feature type="sequence conflict" description="In Ref. 1; AAL02107." evidence="2" ref="1">
    <original>P</original>
    <variation>L</variation>
    <location>
        <position position="17"/>
    </location>
</feature>
<feature type="sequence conflict" description="In Ref. 1; AAL02107." evidence="2" ref="1">
    <original>SG</original>
    <variation>GS</variation>
    <location>
        <begin position="77"/>
        <end position="78"/>
    </location>
</feature>
<reference key="1">
    <citation type="journal article" date="2004" name="Mol. Microbiol.">
        <title>Molybdate transport and its effect on nitrogen utilization in the cyanobacterium Anabaena variabilis ATCC 29413.</title>
        <authorList>
            <person name="Zahalak M."/>
            <person name="Pratte B."/>
            <person name="Werth K.J."/>
            <person name="Thiel T."/>
        </authorList>
    </citation>
    <scope>NUCLEOTIDE SEQUENCE [GENOMIC DNA]</scope>
</reference>
<reference key="2">
    <citation type="journal article" date="2014" name="Stand. Genomic Sci.">
        <title>Complete genome sequence of Anabaena variabilis ATCC 29413.</title>
        <authorList>
            <person name="Thiel T."/>
            <person name="Pratte B.S."/>
            <person name="Zhong J."/>
            <person name="Goodwin L."/>
            <person name="Copeland A."/>
            <person name="Lucas S."/>
            <person name="Han C."/>
            <person name="Pitluck S."/>
            <person name="Land M.L."/>
            <person name="Kyrpides N.C."/>
            <person name="Woyke T."/>
        </authorList>
    </citation>
    <scope>NUCLEOTIDE SEQUENCE [LARGE SCALE GENOMIC DNA]</scope>
    <source>
        <strain>ATCC 29413 / PCC 7937</strain>
    </source>
</reference>